<keyword id="KW-0997">Cell inner membrane</keyword>
<keyword id="KW-1003">Cell membrane</keyword>
<keyword id="KW-0472">Membrane</keyword>
<keyword id="KW-1185">Reference proteome</keyword>
<keyword id="KW-0812">Transmembrane</keyword>
<keyword id="KW-1133">Transmembrane helix</keyword>
<evidence type="ECO:0000250" key="1"/>
<evidence type="ECO:0000255" key="2"/>
<accession>P64440</accession>
<accession>P75813</accession>
<reference key="1">
    <citation type="journal article" date="2001" name="Nature">
        <title>Genome sequence of enterohaemorrhagic Escherichia coli O157:H7.</title>
        <authorList>
            <person name="Perna N.T."/>
            <person name="Plunkett G. III"/>
            <person name="Burland V."/>
            <person name="Mau B."/>
            <person name="Glasner J.D."/>
            <person name="Rose D.J."/>
            <person name="Mayhew G.F."/>
            <person name="Evans P.S."/>
            <person name="Gregor J."/>
            <person name="Kirkpatrick H.A."/>
            <person name="Posfai G."/>
            <person name="Hackett J."/>
            <person name="Klink S."/>
            <person name="Boutin A."/>
            <person name="Shao Y."/>
            <person name="Miller L."/>
            <person name="Grotbeck E.J."/>
            <person name="Davis N.W."/>
            <person name="Lim A."/>
            <person name="Dimalanta E.T."/>
            <person name="Potamousis K."/>
            <person name="Apodaca J."/>
            <person name="Anantharaman T.S."/>
            <person name="Lin J."/>
            <person name="Yen G."/>
            <person name="Schwartz D.C."/>
            <person name="Welch R.A."/>
            <person name="Blattner F.R."/>
        </authorList>
    </citation>
    <scope>NUCLEOTIDE SEQUENCE [LARGE SCALE GENOMIC DNA]</scope>
    <source>
        <strain>O157:H7 / EDL933 / ATCC 700927 / EHEC</strain>
    </source>
</reference>
<reference key="2">
    <citation type="journal article" date="2001" name="DNA Res.">
        <title>Complete genome sequence of enterohemorrhagic Escherichia coli O157:H7 and genomic comparison with a laboratory strain K-12.</title>
        <authorList>
            <person name="Hayashi T."/>
            <person name="Makino K."/>
            <person name="Ohnishi M."/>
            <person name="Kurokawa K."/>
            <person name="Ishii K."/>
            <person name="Yokoyama K."/>
            <person name="Han C.-G."/>
            <person name="Ohtsubo E."/>
            <person name="Nakayama K."/>
            <person name="Murata T."/>
            <person name="Tanaka M."/>
            <person name="Tobe T."/>
            <person name="Iida T."/>
            <person name="Takami H."/>
            <person name="Honda T."/>
            <person name="Sasakawa C."/>
            <person name="Ogasawara N."/>
            <person name="Yasunaga T."/>
            <person name="Kuhara S."/>
            <person name="Shiba T."/>
            <person name="Hattori M."/>
            <person name="Shinagawa H."/>
        </authorList>
    </citation>
    <scope>NUCLEOTIDE SEQUENCE [LARGE SCALE GENOMIC DNA]</scope>
    <source>
        <strain>O157:H7 / Sakai / RIMD 0509952 / EHEC</strain>
    </source>
</reference>
<comment type="subcellular location">
    <subcellularLocation>
        <location evidence="1">Cell inner membrane</location>
        <topology evidence="1">Multi-pass membrane protein</topology>
    </subcellularLocation>
</comment>
<sequence>MKHKQRWAGAICCFVLFIVVCLFLATHMKGAFRAAGHPEIGLLFFILPGAVASFFSQRREVLKPLFGAMLAAPCSMLIMRLFFSPTRSFWQELAWLLSAVFWCALGALCFLFISSLFKPQHRKNQ</sequence>
<dbReference type="EMBL" id="AE005174">
    <property type="protein sequence ID" value="AAG55224.1"/>
    <property type="molecule type" value="Genomic_DNA"/>
</dbReference>
<dbReference type="EMBL" id="BA000007">
    <property type="protein sequence ID" value="BAB34351.1"/>
    <property type="molecule type" value="Genomic_DNA"/>
</dbReference>
<dbReference type="PIR" id="D85595">
    <property type="entry name" value="D85595"/>
</dbReference>
<dbReference type="PIR" id="H90744">
    <property type="entry name" value="H90744"/>
</dbReference>
<dbReference type="RefSeq" id="NP_308955.1">
    <property type="nucleotide sequence ID" value="NC_002695.1"/>
</dbReference>
<dbReference type="RefSeq" id="WP_000681108.1">
    <property type="nucleotide sequence ID" value="NZ_VOAI01000006.1"/>
</dbReference>
<dbReference type="STRING" id="155864.Z1075"/>
<dbReference type="GeneID" id="917668"/>
<dbReference type="KEGG" id="ece:Z1075"/>
<dbReference type="KEGG" id="ecs:ECs_0928"/>
<dbReference type="PATRIC" id="fig|386585.9.peg.1045"/>
<dbReference type="eggNOG" id="ENOG5031BJ4">
    <property type="taxonomic scope" value="Bacteria"/>
</dbReference>
<dbReference type="HOGENOM" id="CLU_140365_0_0_6"/>
<dbReference type="OMA" id="WQELAYV"/>
<dbReference type="Proteomes" id="UP000000558">
    <property type="component" value="Chromosome"/>
</dbReference>
<dbReference type="Proteomes" id="UP000002519">
    <property type="component" value="Chromosome"/>
</dbReference>
<dbReference type="GO" id="GO:0005886">
    <property type="term" value="C:plasma membrane"/>
    <property type="evidence" value="ECO:0007669"/>
    <property type="project" value="UniProtKB-SubCell"/>
</dbReference>
<dbReference type="InterPro" id="IPR020368">
    <property type="entry name" value="Uncharacterised_YbjM"/>
</dbReference>
<dbReference type="Pfam" id="PF11045">
    <property type="entry name" value="YbjM"/>
    <property type="match status" value="1"/>
</dbReference>
<gene>
    <name type="primary">ybjM</name>
    <name type="ordered locus">Z1075</name>
    <name type="ordered locus">ECs0928</name>
</gene>
<name>YBJM_ECO57</name>
<feature type="chain" id="PRO_0000168741" description="Inner membrane protein YbjM">
    <location>
        <begin position="1"/>
        <end position="125"/>
    </location>
</feature>
<feature type="topological domain" description="Cytoplasmic" evidence="2">
    <location>
        <begin position="1"/>
        <end position="6"/>
    </location>
</feature>
<feature type="transmembrane region" description="Helical" evidence="2">
    <location>
        <begin position="7"/>
        <end position="27"/>
    </location>
</feature>
<feature type="topological domain" description="Periplasmic" evidence="2">
    <location>
        <begin position="28"/>
        <end position="34"/>
    </location>
</feature>
<feature type="transmembrane region" description="Helical" evidence="2">
    <location>
        <begin position="35"/>
        <end position="55"/>
    </location>
</feature>
<feature type="topological domain" description="Cytoplasmic" evidence="2">
    <location>
        <begin position="56"/>
        <end position="64"/>
    </location>
</feature>
<feature type="transmembrane region" description="Helical" evidence="2">
    <location>
        <begin position="65"/>
        <end position="85"/>
    </location>
</feature>
<feature type="topological domain" description="Periplasmic" evidence="2">
    <location>
        <begin position="86"/>
        <end position="92"/>
    </location>
</feature>
<feature type="transmembrane region" description="Helical" evidence="2">
    <location>
        <begin position="93"/>
        <end position="113"/>
    </location>
</feature>
<feature type="topological domain" description="Cytoplasmic" evidence="2">
    <location>
        <begin position="114"/>
        <end position="125"/>
    </location>
</feature>
<organism>
    <name type="scientific">Escherichia coli O157:H7</name>
    <dbReference type="NCBI Taxonomy" id="83334"/>
    <lineage>
        <taxon>Bacteria</taxon>
        <taxon>Pseudomonadati</taxon>
        <taxon>Pseudomonadota</taxon>
        <taxon>Gammaproteobacteria</taxon>
        <taxon>Enterobacterales</taxon>
        <taxon>Enterobacteriaceae</taxon>
        <taxon>Escherichia</taxon>
    </lineage>
</organism>
<protein>
    <recommendedName>
        <fullName>Inner membrane protein YbjM</fullName>
    </recommendedName>
</protein>
<proteinExistence type="inferred from homology"/>